<comment type="function">
    <text evidence="1">Binds directly to 23S rRNA. Probably involved in E site tRNA release.</text>
</comment>
<comment type="function">
    <text evidence="1">Protein L1 is also a translational repressor protein, it controls the translation of its operon by binding to its mRNA.</text>
</comment>
<comment type="subunit">
    <text evidence="1">Part of the 50S ribosomal subunit.</text>
</comment>
<comment type="similarity">
    <text evidence="1">Belongs to the universal ribosomal protein uL1 family.</text>
</comment>
<comment type="sequence caution" evidence="2">
    <conflict type="erroneous initiation">
        <sequence resource="EMBL-CDS" id="AAB86152"/>
    </conflict>
</comment>
<accession>O27716</accession>
<reference key="1">
    <citation type="journal article" date="1997" name="J. Bacteriol.">
        <title>Complete genome sequence of Methanobacterium thermoautotrophicum deltaH: functional analysis and comparative genomics.</title>
        <authorList>
            <person name="Smith D.R."/>
            <person name="Doucette-Stamm L.A."/>
            <person name="Deloughery C."/>
            <person name="Lee H.-M."/>
            <person name="Dubois J."/>
            <person name="Aldredge T."/>
            <person name="Bashirzadeh R."/>
            <person name="Blakely D."/>
            <person name="Cook R."/>
            <person name="Gilbert K."/>
            <person name="Harrison D."/>
            <person name="Hoang L."/>
            <person name="Keagle P."/>
            <person name="Lumm W."/>
            <person name="Pothier B."/>
            <person name="Qiu D."/>
            <person name="Spadafora R."/>
            <person name="Vicare R."/>
            <person name="Wang Y."/>
            <person name="Wierzbowski J."/>
            <person name="Gibson R."/>
            <person name="Jiwani N."/>
            <person name="Caruso A."/>
            <person name="Bush D."/>
            <person name="Safer H."/>
            <person name="Patwell D."/>
            <person name="Prabhakar S."/>
            <person name="McDougall S."/>
            <person name="Shimer G."/>
            <person name="Goyal A."/>
            <person name="Pietrovski S."/>
            <person name="Church G.M."/>
            <person name="Daniels C.J."/>
            <person name="Mao J.-I."/>
            <person name="Rice P."/>
            <person name="Noelling J."/>
            <person name="Reeve J.N."/>
        </authorList>
    </citation>
    <scope>NUCLEOTIDE SEQUENCE [LARGE SCALE GENOMIC DNA]</scope>
    <source>
        <strain>ATCC 29096 / DSM 1053 / JCM 10044 / NBRC 100330 / Delta H</strain>
    </source>
</reference>
<name>RL1_METTH</name>
<organism>
    <name type="scientific">Methanothermobacter thermautotrophicus (strain ATCC 29096 / DSM 1053 / JCM 10044 / NBRC 100330 / Delta H)</name>
    <name type="common">Methanobacterium thermoautotrophicum</name>
    <dbReference type="NCBI Taxonomy" id="187420"/>
    <lineage>
        <taxon>Archaea</taxon>
        <taxon>Methanobacteriati</taxon>
        <taxon>Methanobacteriota</taxon>
        <taxon>Methanomada group</taxon>
        <taxon>Methanobacteria</taxon>
        <taxon>Methanobacteriales</taxon>
        <taxon>Methanobacteriaceae</taxon>
        <taxon>Methanothermobacter</taxon>
    </lineage>
</organism>
<evidence type="ECO:0000255" key="1">
    <source>
        <dbReference type="HAMAP-Rule" id="MF_01318"/>
    </source>
</evidence>
<evidence type="ECO:0000305" key="2"/>
<protein>
    <recommendedName>
        <fullName evidence="1">Large ribosomal subunit protein uL1</fullName>
    </recommendedName>
    <alternativeName>
        <fullName evidence="2">50S ribosomal protein L1</fullName>
    </alternativeName>
</protein>
<feature type="chain" id="PRO_0000125803" description="Large ribosomal subunit protein uL1">
    <location>
        <begin position="1"/>
        <end position="212"/>
    </location>
</feature>
<gene>
    <name evidence="1" type="primary">rpl1</name>
    <name type="ordered locus">MTH_1680</name>
</gene>
<dbReference type="EMBL" id="AE000666">
    <property type="protein sequence ID" value="AAB86152.1"/>
    <property type="status" value="ALT_INIT"/>
    <property type="molecule type" value="Genomic_DNA"/>
</dbReference>
<dbReference type="PIR" id="F69091">
    <property type="entry name" value="F69091"/>
</dbReference>
<dbReference type="RefSeq" id="WP_048061119.1">
    <property type="nucleotide sequence ID" value="NC_000916.1"/>
</dbReference>
<dbReference type="SMR" id="O27716"/>
<dbReference type="FunCoup" id="O27716">
    <property type="interactions" value="138"/>
</dbReference>
<dbReference type="STRING" id="187420.MTH_1680"/>
<dbReference type="PaxDb" id="187420-MTH_1680"/>
<dbReference type="EnsemblBacteria" id="AAB86152">
    <property type="protein sequence ID" value="AAB86152"/>
    <property type="gene ID" value="MTH_1680"/>
</dbReference>
<dbReference type="KEGG" id="mth:MTH_1680"/>
<dbReference type="PATRIC" id="fig|187420.15.peg.1640"/>
<dbReference type="HOGENOM" id="CLU_062853_4_0_2"/>
<dbReference type="InParanoid" id="O27716"/>
<dbReference type="Proteomes" id="UP000005223">
    <property type="component" value="Chromosome"/>
</dbReference>
<dbReference type="GO" id="GO:0015934">
    <property type="term" value="C:large ribosomal subunit"/>
    <property type="evidence" value="ECO:0007669"/>
    <property type="project" value="InterPro"/>
</dbReference>
<dbReference type="GO" id="GO:0019843">
    <property type="term" value="F:rRNA binding"/>
    <property type="evidence" value="ECO:0007669"/>
    <property type="project" value="UniProtKB-UniRule"/>
</dbReference>
<dbReference type="GO" id="GO:0003735">
    <property type="term" value="F:structural constituent of ribosome"/>
    <property type="evidence" value="ECO:0007669"/>
    <property type="project" value="InterPro"/>
</dbReference>
<dbReference type="GO" id="GO:0000049">
    <property type="term" value="F:tRNA binding"/>
    <property type="evidence" value="ECO:0007669"/>
    <property type="project" value="UniProtKB-KW"/>
</dbReference>
<dbReference type="GO" id="GO:0006417">
    <property type="term" value="P:regulation of translation"/>
    <property type="evidence" value="ECO:0007669"/>
    <property type="project" value="UniProtKB-KW"/>
</dbReference>
<dbReference type="GO" id="GO:0006412">
    <property type="term" value="P:translation"/>
    <property type="evidence" value="ECO:0007669"/>
    <property type="project" value="UniProtKB-UniRule"/>
</dbReference>
<dbReference type="CDD" id="cd00403">
    <property type="entry name" value="Ribosomal_L1"/>
    <property type="match status" value="1"/>
</dbReference>
<dbReference type="FunFam" id="3.40.50.790:FF:000005">
    <property type="entry name" value="50S ribosomal protein L1"/>
    <property type="match status" value="1"/>
</dbReference>
<dbReference type="Gene3D" id="3.30.190.20">
    <property type="match status" value="1"/>
</dbReference>
<dbReference type="Gene3D" id="3.40.50.790">
    <property type="match status" value="1"/>
</dbReference>
<dbReference type="HAMAP" id="MF_01318_A">
    <property type="entry name" value="Ribosomal_uL1_A"/>
    <property type="match status" value="1"/>
</dbReference>
<dbReference type="InterPro" id="IPR002143">
    <property type="entry name" value="Ribosomal_uL1"/>
</dbReference>
<dbReference type="InterPro" id="IPR023674">
    <property type="entry name" value="Ribosomal_uL1-like"/>
</dbReference>
<dbReference type="InterPro" id="IPR028364">
    <property type="entry name" value="Ribosomal_uL1/biogenesis"/>
</dbReference>
<dbReference type="InterPro" id="IPR016095">
    <property type="entry name" value="Ribosomal_uL1_3-a/b-sand"/>
</dbReference>
<dbReference type="InterPro" id="IPR023669">
    <property type="entry name" value="Ribosomal_uL1_arc"/>
</dbReference>
<dbReference type="NCBIfam" id="NF003244">
    <property type="entry name" value="PRK04203.1"/>
    <property type="match status" value="1"/>
</dbReference>
<dbReference type="PANTHER" id="PTHR36427">
    <property type="entry name" value="54S RIBOSOMAL PROTEIN L1, MITOCHONDRIAL"/>
    <property type="match status" value="1"/>
</dbReference>
<dbReference type="PANTHER" id="PTHR36427:SF3">
    <property type="entry name" value="LARGE RIBOSOMAL SUBUNIT PROTEIN UL1M"/>
    <property type="match status" value="1"/>
</dbReference>
<dbReference type="Pfam" id="PF00687">
    <property type="entry name" value="Ribosomal_L1"/>
    <property type="match status" value="1"/>
</dbReference>
<dbReference type="PIRSF" id="PIRSF002155">
    <property type="entry name" value="Ribosomal_L1"/>
    <property type="match status" value="1"/>
</dbReference>
<dbReference type="SUPFAM" id="SSF56808">
    <property type="entry name" value="Ribosomal protein L1"/>
    <property type="match status" value="1"/>
</dbReference>
<keyword id="KW-1185">Reference proteome</keyword>
<keyword id="KW-0678">Repressor</keyword>
<keyword id="KW-0687">Ribonucleoprotein</keyword>
<keyword id="KW-0689">Ribosomal protein</keyword>
<keyword id="KW-0694">RNA-binding</keyword>
<keyword id="KW-0699">rRNA-binding</keyword>
<keyword id="KW-0810">Translation regulation</keyword>
<keyword id="KW-0820">tRNA-binding</keyword>
<proteinExistence type="inferred from homology"/>
<sequence length="212" mass="23843">MQQEIMEAVKKAKELSRPRNFTQSMDVILNIKDLDVNKPENRFDEEVSLPNGRGKDVKIAVIADGELALQAKNAGADLVITKDELEELGKNRKEAKKLANQYEFFVAQADMMPLVGRFMGPVLGPRKKMPKPVPATINPEPILNKLRDTVKVRIKDQPVVHTVVGTEDMDDEKLAENIEAVLQTIDRKLEKGRNQLKSMYVKTTMGPVVRVI</sequence>